<evidence type="ECO:0000255" key="1">
    <source>
        <dbReference type="HAMAP-Rule" id="MF_00200"/>
    </source>
</evidence>
<name>RTCA_IGNH4</name>
<reference key="1">
    <citation type="journal article" date="2008" name="Genome Biol.">
        <title>A genomic analysis of the archaeal system Ignicoccus hospitalis-Nanoarchaeum equitans.</title>
        <authorList>
            <person name="Podar M."/>
            <person name="Anderson I."/>
            <person name="Makarova K.S."/>
            <person name="Elkins J.G."/>
            <person name="Ivanova N."/>
            <person name="Wall M.A."/>
            <person name="Lykidis A."/>
            <person name="Mavromatis K."/>
            <person name="Sun H."/>
            <person name="Hudson M.E."/>
            <person name="Chen W."/>
            <person name="Deciu C."/>
            <person name="Hutchison D."/>
            <person name="Eads J.R."/>
            <person name="Anderson A."/>
            <person name="Fernandes F."/>
            <person name="Szeto E."/>
            <person name="Lapidus A."/>
            <person name="Kyrpides N.C."/>
            <person name="Saier M.H. Jr."/>
            <person name="Richardson P.M."/>
            <person name="Rachel R."/>
            <person name="Huber H."/>
            <person name="Eisen J.A."/>
            <person name="Koonin E.V."/>
            <person name="Keller M."/>
            <person name="Stetter K.O."/>
        </authorList>
    </citation>
    <scope>NUCLEOTIDE SEQUENCE [LARGE SCALE GENOMIC DNA]</scope>
    <source>
        <strain>KIN4/I / DSM 18386 / JCM 14125</strain>
    </source>
</reference>
<feature type="chain" id="PRO_0000325190" description="RNA 3'-terminal phosphate cyclase">
    <location>
        <begin position="1"/>
        <end position="353"/>
    </location>
</feature>
<feature type="active site" description="Tele-AMP-histidine intermediate" evidence="1">
    <location>
        <position position="315"/>
    </location>
</feature>
<feature type="binding site" evidence="1">
    <location>
        <position position="100"/>
    </location>
    <ligand>
        <name>ATP</name>
        <dbReference type="ChEBI" id="CHEBI:30616"/>
    </ligand>
</feature>
<feature type="binding site" evidence="1">
    <location>
        <begin position="289"/>
        <end position="292"/>
    </location>
    <ligand>
        <name>ATP</name>
        <dbReference type="ChEBI" id="CHEBI:30616"/>
    </ligand>
</feature>
<sequence>MIEIDGSFGEGGGQILRTSVALSAVTLKPVRIFNIRAKRKNPGLRRQHMVAVKALAEMTDAEVRGLELGSTEIVFIPKTLKAGTFRFDIGTAGSVSLVLQAVTPAALFAPGEVRVQLRGGTDVPMSPPVDYLRFVFYPLLERFGAKTELVLKRRGHYPKGGGEVEFASRPVDSLTQWGEVERGEVLKVRGLSHCVKLPKHVAERQAKAAEEVLKKSGLKNVDIDLEWYPPERDPHLGPGSGIVLWAITERSLLGADSLGARGKRAERVGEEAARKLLEDLSTGKALDRHMSDMIVPYVSLACGRTEVGGAALTMHAWTHVHVVKKFLPELEVEISGELNKPFVMRVKGVCWQR</sequence>
<gene>
    <name evidence="1" type="primary">rtcA</name>
    <name type="ordered locus">Igni_0532</name>
</gene>
<protein>
    <recommendedName>
        <fullName evidence="1">RNA 3'-terminal phosphate cyclase</fullName>
        <shortName evidence="1">RNA cyclase</shortName>
        <shortName evidence="1">RNA-3'-phosphate cyclase</shortName>
        <ecNumber evidence="1">6.5.1.4</ecNumber>
    </recommendedName>
</protein>
<dbReference type="EC" id="6.5.1.4" evidence="1"/>
<dbReference type="EMBL" id="CP000816">
    <property type="protein sequence ID" value="ABU81714.1"/>
    <property type="molecule type" value="Genomic_DNA"/>
</dbReference>
<dbReference type="RefSeq" id="WP_011998566.1">
    <property type="nucleotide sequence ID" value="NC_009776.1"/>
</dbReference>
<dbReference type="SMR" id="A8A9W2"/>
<dbReference type="STRING" id="453591.Igni_0532"/>
<dbReference type="GeneID" id="5562318"/>
<dbReference type="KEGG" id="iho:Igni_0532"/>
<dbReference type="eggNOG" id="arCOG04125">
    <property type="taxonomic scope" value="Archaea"/>
</dbReference>
<dbReference type="HOGENOM" id="CLU_027882_0_0_2"/>
<dbReference type="OrthoDB" id="7994at2157"/>
<dbReference type="PhylomeDB" id="A8A9W2"/>
<dbReference type="Proteomes" id="UP000000262">
    <property type="component" value="Chromosome"/>
</dbReference>
<dbReference type="GO" id="GO:0005737">
    <property type="term" value="C:cytoplasm"/>
    <property type="evidence" value="ECO:0007669"/>
    <property type="project" value="UniProtKB-SubCell"/>
</dbReference>
<dbReference type="GO" id="GO:0005524">
    <property type="term" value="F:ATP binding"/>
    <property type="evidence" value="ECO:0007669"/>
    <property type="project" value="UniProtKB-KW"/>
</dbReference>
<dbReference type="GO" id="GO:0003963">
    <property type="term" value="F:RNA-3'-phosphate cyclase activity"/>
    <property type="evidence" value="ECO:0007669"/>
    <property type="project" value="UniProtKB-UniRule"/>
</dbReference>
<dbReference type="GO" id="GO:0006396">
    <property type="term" value="P:RNA processing"/>
    <property type="evidence" value="ECO:0007669"/>
    <property type="project" value="InterPro"/>
</dbReference>
<dbReference type="CDD" id="cd00874">
    <property type="entry name" value="RNA_Cyclase_Class_II"/>
    <property type="match status" value="1"/>
</dbReference>
<dbReference type="FunFam" id="3.30.360.20:FF:000002">
    <property type="entry name" value="RNA terminal phosphate cyclase-like 1"/>
    <property type="match status" value="1"/>
</dbReference>
<dbReference type="Gene3D" id="3.65.10.20">
    <property type="entry name" value="RNA 3'-terminal phosphate cyclase domain"/>
    <property type="match status" value="1"/>
</dbReference>
<dbReference type="Gene3D" id="3.30.360.20">
    <property type="entry name" value="RNA 3'-terminal phosphate cyclase, insert domain"/>
    <property type="match status" value="1"/>
</dbReference>
<dbReference type="HAMAP" id="MF_00200">
    <property type="entry name" value="RTC"/>
    <property type="match status" value="1"/>
</dbReference>
<dbReference type="InterPro" id="IPR013791">
    <property type="entry name" value="RNA3'-term_phos_cycl_insert"/>
</dbReference>
<dbReference type="InterPro" id="IPR023797">
    <property type="entry name" value="RNA3'_phos_cyclase_dom"/>
</dbReference>
<dbReference type="InterPro" id="IPR037136">
    <property type="entry name" value="RNA3'_phos_cyclase_dom_sf"/>
</dbReference>
<dbReference type="InterPro" id="IPR000228">
    <property type="entry name" value="RNA3'_term_phos_cyc"/>
</dbReference>
<dbReference type="InterPro" id="IPR017770">
    <property type="entry name" value="RNA3'_term_phos_cyc_type_1"/>
</dbReference>
<dbReference type="InterPro" id="IPR020719">
    <property type="entry name" value="RNA3'_term_phos_cycl-like_CS"/>
</dbReference>
<dbReference type="InterPro" id="IPR013792">
    <property type="entry name" value="RNA3'P_cycl/enolpyr_Trfase_a/b"/>
</dbReference>
<dbReference type="InterPro" id="IPR036553">
    <property type="entry name" value="RPTC_insert"/>
</dbReference>
<dbReference type="NCBIfam" id="TIGR03399">
    <property type="entry name" value="RNA_3prim_cycl"/>
    <property type="match status" value="1"/>
</dbReference>
<dbReference type="PANTHER" id="PTHR11096">
    <property type="entry name" value="RNA 3' TERMINAL PHOSPHATE CYCLASE"/>
    <property type="match status" value="1"/>
</dbReference>
<dbReference type="PANTHER" id="PTHR11096:SF0">
    <property type="entry name" value="RNA 3'-TERMINAL PHOSPHATE CYCLASE"/>
    <property type="match status" value="1"/>
</dbReference>
<dbReference type="Pfam" id="PF01137">
    <property type="entry name" value="RTC"/>
    <property type="match status" value="1"/>
</dbReference>
<dbReference type="Pfam" id="PF05189">
    <property type="entry name" value="RTC_insert"/>
    <property type="match status" value="1"/>
</dbReference>
<dbReference type="PIRSF" id="PIRSF005378">
    <property type="entry name" value="RNA3'_term_phos_cycl_euk"/>
    <property type="match status" value="1"/>
</dbReference>
<dbReference type="SUPFAM" id="SSF55205">
    <property type="entry name" value="EPT/RTPC-like"/>
    <property type="match status" value="1"/>
</dbReference>
<dbReference type="SUPFAM" id="SSF52913">
    <property type="entry name" value="RNA 3'-terminal phosphate cyclase, RPTC, insert domain"/>
    <property type="match status" value="1"/>
</dbReference>
<dbReference type="PROSITE" id="PS01287">
    <property type="entry name" value="RTC"/>
    <property type="match status" value="1"/>
</dbReference>
<comment type="function">
    <text evidence="1">Catalyzes the conversion of 3'-phosphate to a 2',3'-cyclic phosphodiester at the end of RNA. The mechanism of action of the enzyme occurs in 3 steps: (A) adenylation of the enzyme by ATP; (B) transfer of adenylate to an RNA-N3'P to produce RNA-N3'PP5'A; (C) and attack of the adjacent 2'-hydroxyl on the 3'-phosphorus in the diester linkage to produce the cyclic end product. The biological role of this enzyme is unknown but it is likely to function in some aspects of cellular RNA processing.</text>
</comment>
<comment type="catalytic activity">
    <reaction evidence="1">
        <text>a 3'-end 3'-phospho-ribonucleotide-RNA + ATP = a 3'-end 2',3'-cyclophospho-ribonucleotide-RNA + AMP + diphosphate</text>
        <dbReference type="Rhea" id="RHEA:23976"/>
        <dbReference type="Rhea" id="RHEA-COMP:10463"/>
        <dbReference type="Rhea" id="RHEA-COMP:10464"/>
        <dbReference type="ChEBI" id="CHEBI:30616"/>
        <dbReference type="ChEBI" id="CHEBI:33019"/>
        <dbReference type="ChEBI" id="CHEBI:83062"/>
        <dbReference type="ChEBI" id="CHEBI:83064"/>
        <dbReference type="ChEBI" id="CHEBI:456215"/>
        <dbReference type="EC" id="6.5.1.4"/>
    </reaction>
</comment>
<comment type="subcellular location">
    <subcellularLocation>
        <location evidence="1">Cytoplasm</location>
    </subcellularLocation>
</comment>
<comment type="similarity">
    <text evidence="1">Belongs to the RNA 3'-terminal cyclase family. Type 1 subfamily.</text>
</comment>
<organism>
    <name type="scientific">Ignicoccus hospitalis (strain KIN4/I / DSM 18386 / JCM 14125)</name>
    <dbReference type="NCBI Taxonomy" id="453591"/>
    <lineage>
        <taxon>Archaea</taxon>
        <taxon>Thermoproteota</taxon>
        <taxon>Thermoprotei</taxon>
        <taxon>Desulfurococcales</taxon>
        <taxon>Desulfurococcaceae</taxon>
        <taxon>Ignicoccus</taxon>
    </lineage>
</organism>
<keyword id="KW-0067">ATP-binding</keyword>
<keyword id="KW-0963">Cytoplasm</keyword>
<keyword id="KW-0436">Ligase</keyword>
<keyword id="KW-0547">Nucleotide-binding</keyword>
<keyword id="KW-1185">Reference proteome</keyword>
<proteinExistence type="inferred from homology"/>
<accession>A8A9W2</accession>